<reference key="1">
    <citation type="journal article" date="1992" name="Virology">
        <title>The DNA sequence of equine herpesvirus-1.</title>
        <authorList>
            <person name="Telford E.A.R."/>
            <person name="Watson M.S."/>
            <person name="McBride K."/>
            <person name="Davison A.J."/>
        </authorList>
    </citation>
    <scope>NUCLEOTIDE SEQUENCE [LARGE SCALE GENOMIC DNA]</scope>
</reference>
<protein>
    <recommendedName>
        <fullName evidence="1">DNA primase</fullName>
        <ecNumber evidence="1">2.7.7.-</ecNumber>
    </recommendedName>
</protein>
<comment type="function">
    <text evidence="1">Essential component of the helicase/primase complex. Unwinds the DNA at the replication forks and generates single-stranded DNA for both leading and lagging strand synthesis. The primase initiates primer synthesis and thereby produces large amount of short RNA primers on the lagging strand that the polymerase elongates using dNTPs.</text>
</comment>
<comment type="subunit">
    <text evidence="1">Associates with the helicase and the primase-associated factor to form the helicase-primase factor.</text>
</comment>
<comment type="subcellular location">
    <subcellularLocation>
        <location evidence="1">Host nucleus</location>
    </subcellularLocation>
    <text evidence="1">Requires the presence of the primase associated factor to properly localize in the host cell nucleus.</text>
</comment>
<comment type="similarity">
    <text evidence="1">Belongs to the herpesviridae DNA primase family.</text>
</comment>
<organismHost>
    <name type="scientific">Equus caballus</name>
    <name type="common">Horse</name>
    <dbReference type="NCBI Taxonomy" id="9796"/>
</organismHost>
<organism>
    <name type="scientific">Equine herpesvirus 1 (strain Ab4p)</name>
    <name type="common">EHV-1</name>
    <name type="synonym">Equine abortion virus</name>
    <dbReference type="NCBI Taxonomy" id="31520"/>
    <lineage>
        <taxon>Viruses</taxon>
        <taxon>Duplodnaviria</taxon>
        <taxon>Heunggongvirae</taxon>
        <taxon>Peploviricota</taxon>
        <taxon>Herviviricetes</taxon>
        <taxon>Herpesvirales</taxon>
        <taxon>Orthoherpesviridae</taxon>
        <taxon>Alphaherpesvirinae</taxon>
        <taxon>Varicellovirus</taxon>
        <taxon>Varicellovirus equidalpha1</taxon>
        <taxon>Equid alphaherpesvirus 1</taxon>
    </lineage>
</organism>
<accession>P28962</accession>
<accession>Q6S6R4</accession>
<dbReference type="EC" id="2.7.7.-" evidence="1"/>
<dbReference type="EMBL" id="AY665713">
    <property type="protein sequence ID" value="AAT67264.1"/>
    <property type="molecule type" value="Genomic_DNA"/>
</dbReference>
<dbReference type="PIR" id="H36795">
    <property type="entry name" value="WZBEA6"/>
</dbReference>
<dbReference type="KEGG" id="vg:1487515"/>
<dbReference type="Proteomes" id="UP000001189">
    <property type="component" value="Segment"/>
</dbReference>
<dbReference type="GO" id="GO:0042025">
    <property type="term" value="C:host cell nucleus"/>
    <property type="evidence" value="ECO:0007669"/>
    <property type="project" value="UniProtKB-SubCell"/>
</dbReference>
<dbReference type="GO" id="GO:0003899">
    <property type="term" value="F:DNA-directed RNA polymerase activity"/>
    <property type="evidence" value="ECO:0007669"/>
    <property type="project" value="InterPro"/>
</dbReference>
<dbReference type="GO" id="GO:0008270">
    <property type="term" value="F:zinc ion binding"/>
    <property type="evidence" value="ECO:0007669"/>
    <property type="project" value="UniProtKB-KW"/>
</dbReference>
<dbReference type="GO" id="GO:0039686">
    <property type="term" value="P:bidirectional double-stranded viral DNA replication"/>
    <property type="evidence" value="ECO:0007669"/>
    <property type="project" value="InterPro"/>
</dbReference>
<dbReference type="GO" id="GO:0006260">
    <property type="term" value="P:DNA replication"/>
    <property type="evidence" value="ECO:0007669"/>
    <property type="project" value="UniProtKB-KW"/>
</dbReference>
<dbReference type="HAMAP" id="MF_04011">
    <property type="entry name" value="HSV_PRIM"/>
    <property type="match status" value="1"/>
</dbReference>
<dbReference type="InterPro" id="IPR033685">
    <property type="entry name" value="HSV_PRIM"/>
</dbReference>
<dbReference type="Pfam" id="PF03121">
    <property type="entry name" value="Herpes_UL52"/>
    <property type="match status" value="1"/>
</dbReference>
<feature type="chain" id="PRO_0000116105" description="DNA primase">
    <location>
        <begin position="1"/>
        <end position="1081"/>
    </location>
</feature>
<feature type="zinc finger region" description="CHC2-type" evidence="1">
    <location>
        <begin position="1024"/>
        <end position="1064"/>
    </location>
</feature>
<feature type="region of interest" description="Disordered" evidence="2">
    <location>
        <begin position="484"/>
        <end position="508"/>
    </location>
</feature>
<feature type="compositionally biased region" description="Polar residues" evidence="2">
    <location>
        <begin position="484"/>
        <end position="497"/>
    </location>
</feature>
<feature type="site" description="Essential for primase activity" evidence="1">
    <location>
        <position position="652"/>
    </location>
</feature>
<feature type="site" description="Essential for primase activity" evidence="1">
    <location>
        <position position="654"/>
    </location>
</feature>
<name>PRIM_EHV1B</name>
<keyword id="KW-0235">DNA replication</keyword>
<keyword id="KW-1048">Host nucleus</keyword>
<keyword id="KW-0479">Metal-binding</keyword>
<keyword id="KW-1185">Reference proteome</keyword>
<keyword id="KW-0808">Transferase</keyword>
<keyword id="KW-0862">Zinc</keyword>
<keyword id="KW-0863">Zinc-finger</keyword>
<proteinExistence type="inferred from homology"/>
<gene>
    <name type="ordered locus">7</name>
</gene>
<sequence>MAQRNPEPTIRVLYATDSCVITYSLMLLTGQESSEGVYAISYDWSSELDDLFGRQPRAPNTDAGDGWSSTEQSDADQLATALLQRKPSVSFCLLSGMVGGASDEPQDRVRPMFVCVFSTWTGARALAMTLSHGHPLSSNTLLQALTEEATFLLHNDLILALAITTENVTARSGRTAAAAKYDPQRGSVKAAVIGHSTGRSGLTSVYIHHENKVLTAFRRLYCNNNTTPFWFASKFGPGEREIVLATRYYLFQAIRCSRSGGTYDLQAVKDFIRTYNVPAAPNPTGLDLTHLTSFSLLSKFCCQSWYSRGPCALALPRYVDLRIQADVAEVSALEGFIAADRQGLRVSDREFITYIYLAHFESFNRKQLYDHLLAVSIADPGDIDRITSTSSLKRGTIEKFFAQVRIQLNIRDYIAHNVNPRVVCLPASIGSQYAQDKTYTPSSTTMSTGSAPLGVCDTSTPILKLLDRVESSLAGRGWIQTIVSPNKPQSVHSTPPLDQSRGDELSPGVSSQCGISRRLLHIASSPPVNGRALPLEVLFGQKGVPGPAPVYRVALPSKRQAFAVIANDRWETTTQNLARPGGSKQAYEGGFALAGFGEIDDCSLAWRDLQLTRTTSGVCRTALASSNASAQMYINRNEIFNSSLAVSNIILDVDFGIKRRVPLGMLHLAMRGFRAGIITTLSLIFSDATVQWDSYPCYFYKTSCPPQLVRALHRGEPSSFPDYVDGVEECYMESDFIDDYAAMEEYTDGPMDDYEMMMVDNECPQAACDNTPPNKEGGKTPLQRLDDTDACECTEKMGFRVTVPVPPPYLLAGPEALRGLARIIQQAVVLERTFTESMCSVLRDFSFIDTGVYSHGRSLRLPFFCKVGDSGEVYGGLYPFYVIPPKCNDVDEFVAQHSNPANFHFHAAPRHPTITHVITDLGGDYVSFFERKVARNREAIMTKRATLESLLSSANVSIKSHEAVEAFVVDVVLGEVVSHLATHFPDQSGEYQTVGVHTVVTKPDWILMQINRSGNAYRSQGFSCLRAKHLRSARGLARTFLSISADVHGRLCASISQQCFATKCGNNKMCTIFTLEVDRAK</sequence>
<evidence type="ECO:0000255" key="1">
    <source>
        <dbReference type="HAMAP-Rule" id="MF_04011"/>
    </source>
</evidence>
<evidence type="ECO:0000256" key="2">
    <source>
        <dbReference type="SAM" id="MobiDB-lite"/>
    </source>
</evidence>